<accession>A0A509AKQ7</accession>
<organism evidence="6">
    <name type="scientific">Plasmodium berghei (strain Anka)</name>
    <dbReference type="NCBI Taxonomy" id="5823"/>
    <lineage>
        <taxon>Eukaryota</taxon>
        <taxon>Sar</taxon>
        <taxon>Alveolata</taxon>
        <taxon>Apicomplexa</taxon>
        <taxon>Aconoidasida</taxon>
        <taxon>Haemosporida</taxon>
        <taxon>Plasmodiidae</taxon>
        <taxon>Plasmodium</taxon>
        <taxon>Plasmodium (Vinckeia)</taxon>
    </lineage>
</organism>
<dbReference type="EMBL" id="LK023123">
    <property type="protein sequence ID" value="VUC55382.1"/>
    <property type="molecule type" value="Genomic_DNA"/>
</dbReference>
<dbReference type="SMR" id="A0A509AKQ7"/>
<dbReference type="STRING" id="5823.A0A509AKQ7"/>
<dbReference type="VEuPathDB" id="PlasmoDB:PBANKA_0822300"/>
<dbReference type="InParanoid" id="A0A509AKQ7"/>
<dbReference type="OMA" id="YYELNHE"/>
<dbReference type="UniPathway" id="UPA00266"/>
<dbReference type="Proteomes" id="UP000074855">
    <property type="component" value="Chromosome 8"/>
</dbReference>
<dbReference type="GO" id="GO:0020011">
    <property type="term" value="C:apicoplast"/>
    <property type="evidence" value="ECO:0007669"/>
    <property type="project" value="UniProtKB-SubCell"/>
</dbReference>
<dbReference type="GO" id="GO:0005739">
    <property type="term" value="C:mitochondrion"/>
    <property type="evidence" value="ECO:0007669"/>
    <property type="project" value="TreeGrafter"/>
</dbReference>
<dbReference type="GO" id="GO:0051539">
    <property type="term" value="F:4 iron, 4 sulfur cluster binding"/>
    <property type="evidence" value="ECO:0007669"/>
    <property type="project" value="UniProtKB-KW"/>
</dbReference>
<dbReference type="GO" id="GO:0005506">
    <property type="term" value="F:iron ion binding"/>
    <property type="evidence" value="ECO:0007669"/>
    <property type="project" value="InterPro"/>
</dbReference>
<dbReference type="GO" id="GO:0016226">
    <property type="term" value="P:iron-sulfur cluster assembly"/>
    <property type="evidence" value="ECO:0007669"/>
    <property type="project" value="InterPro"/>
</dbReference>
<dbReference type="Gene3D" id="3.30.300.130">
    <property type="entry name" value="Fe-S cluster assembly (FSCA)"/>
    <property type="match status" value="1"/>
</dbReference>
<dbReference type="InterPro" id="IPR034904">
    <property type="entry name" value="FSCA_dom_sf"/>
</dbReference>
<dbReference type="InterPro" id="IPR001075">
    <property type="entry name" value="NIF_FeS_clus_asmbl_NifU_C"/>
</dbReference>
<dbReference type="PANTHER" id="PTHR11178">
    <property type="entry name" value="IRON-SULFUR CLUSTER SCAFFOLD PROTEIN NFU-RELATED"/>
    <property type="match status" value="1"/>
</dbReference>
<dbReference type="PANTHER" id="PTHR11178:SF25">
    <property type="entry name" value="NIFU-LIKE PROTEIN 3, CHLOROPLASTIC"/>
    <property type="match status" value="1"/>
</dbReference>
<dbReference type="Pfam" id="PF01106">
    <property type="entry name" value="NifU"/>
    <property type="match status" value="1"/>
</dbReference>
<dbReference type="SUPFAM" id="SSF117916">
    <property type="entry name" value="Fe-S cluster assembly (FSCA) domain-like"/>
    <property type="match status" value="1"/>
</dbReference>
<name>NIFU_PLABA</name>
<evidence type="ECO:0000250" key="1">
    <source>
        <dbReference type="UniProtKB" id="Q8I2T9"/>
    </source>
</evidence>
<evidence type="ECO:0000269" key="2">
    <source>
    </source>
</evidence>
<evidence type="ECO:0000303" key="3">
    <source>
    </source>
</evidence>
<evidence type="ECO:0000305" key="4"/>
<evidence type="ECO:0000312" key="5">
    <source>
        <dbReference type="EMBL" id="VUC55382.1"/>
    </source>
</evidence>
<evidence type="ECO:0000312" key="6">
    <source>
        <dbReference type="Proteomes" id="UP000074855"/>
    </source>
</evidence>
<feature type="chain" id="PRO_0000459597" description="NifU-like scaffold protein">
    <location>
        <begin position="1"/>
        <end position="243"/>
    </location>
</feature>
<comment type="function">
    <text evidence="1">Binds and transfers [4Fe-4S] iron-sulfur clusters to target proteins.</text>
</comment>
<comment type="pathway">
    <text evidence="1">Cofactor biosynthesis; iron-sulfur cluster biosynthesis.</text>
</comment>
<comment type="subunit">
    <text evidence="1">Homodimer.</text>
</comment>
<comment type="subcellular location">
    <subcellularLocation>
        <location evidence="2">Plastid</location>
        <location evidence="2">Apicoplast</location>
    </subcellularLocation>
</comment>
<comment type="disruption phenotype">
    <text evidence="2">Disruption affects formation of merosomes, merozoite-filled vesicles budding from mature liver stage parasites (PubMed:23805304). No significant effect on life cycle progression (PubMed:23805304). No significant effect on the numbers of liver stage parasites (PubMed:23805304). No significant effect on infectivity in mosquito and number of mosquito midgut- and salivary gland-associated sporozoites (PubMed:23805304). No significant effect on the initiation of a blood stage infection (PubMed:23805304). Non-significant delay in blood stage expansion (PubMed:23805304).</text>
</comment>
<comment type="similarity">
    <text evidence="4">Belongs to the NifU family.</text>
</comment>
<reference evidence="6" key="1">
    <citation type="journal article" date="2014" name="BMC Biol.">
        <title>A comprehensive evaluation of rodent malaria parasite genomes and gene expression.</title>
        <authorList>
            <person name="Otto T.D."/>
            <person name="Bohme U."/>
            <person name="Jackson A.P."/>
            <person name="Hunt M."/>
            <person name="Franke-Fayard B."/>
            <person name="Hoeijmakers W.A."/>
            <person name="Religa A.A."/>
            <person name="Robertson L."/>
            <person name="Sanders M."/>
            <person name="Ogun S.A."/>
            <person name="Cunningham D."/>
            <person name="Erhart A."/>
            <person name="Billker O."/>
            <person name="Khan S.M."/>
            <person name="Stunnenberg H.G."/>
            <person name="Langhorne J."/>
            <person name="Holder A.A."/>
            <person name="Waters A.P."/>
            <person name="Newbold C.I."/>
            <person name="Pain A."/>
            <person name="Berriman M."/>
            <person name="Janse C.J."/>
        </authorList>
    </citation>
    <scope>NUCLEOTIDE SEQUENCE [LARGE SCALE GENOMIC DNA]</scope>
    <source>
        <strain evidence="6">ANKA</strain>
    </source>
</reference>
<reference evidence="4" key="2">
    <citation type="journal article" date="2013" name="PLoS ONE">
        <title>Experimental Genetics of Plasmodium berghei NFU in the Apicoplast Iron-Sulfur Cluster Biogenesis Pathway.</title>
        <authorList>
            <person name="Haussig J.M."/>
            <person name="Matuschewski K."/>
            <person name="Kooij T.W."/>
        </authorList>
    </citation>
    <scope>SUBCELLULAR LOCATION</scope>
    <scope>DISRUPTION PHENOTYPE</scope>
</reference>
<gene>
    <name evidence="4" type="primary">NifU</name>
    <name evidence="5" type="ORF">PBANKA_0822300</name>
</gene>
<keyword id="KW-0004">4Fe-4S</keyword>
<keyword id="KW-0933">Apicoplast</keyword>
<keyword id="KW-0408">Iron</keyword>
<keyword id="KW-0411">Iron-sulfur</keyword>
<keyword id="KW-0479">Metal-binding</keyword>
<keyword id="KW-0934">Plastid</keyword>
<keyword id="KW-1185">Reference proteome</keyword>
<proteinExistence type="inferred from homology"/>
<protein>
    <recommendedName>
        <fullName evidence="4">NifU-like scaffold protein</fullName>
        <shortName evidence="3">PbNFUapi</shortName>
    </recommendedName>
</protein>
<sequence>MKYSIASMKVTLFFYFLCAKNIASLKYTKSNLSFLYNGCDNINSGGVNAHRNKTTVQTKNKHSKLKILSLNEKQDEELHYELNPENTEKVLNLIRPKLQIDNGDVELVDIKGNDLYIRLLGNCITCSSNSVTVSQVIKKTLKMYIRGPGNKEPNVIIINFDEINEENILNCLSDLKPYFDFLKIKLVIKEMINNKENINNSVMLVFKNIENEDKEVNIPHNIKTEITGRLKQNFPTLTVNFEN</sequence>